<dbReference type="EMBL" id="CP001063">
    <property type="protein sequence ID" value="ACD07253.1"/>
    <property type="molecule type" value="Genomic_DNA"/>
</dbReference>
<dbReference type="RefSeq" id="WP_000801125.1">
    <property type="nucleotide sequence ID" value="NC_010658.1"/>
</dbReference>
<dbReference type="SMR" id="B2U4L9"/>
<dbReference type="STRING" id="344609.SbBS512_E0337"/>
<dbReference type="GeneID" id="93777044"/>
<dbReference type="KEGG" id="sbc:SbBS512_E0337"/>
<dbReference type="HOGENOM" id="CLU_087843_4_1_6"/>
<dbReference type="Proteomes" id="UP000001030">
    <property type="component" value="Chromosome"/>
</dbReference>
<dbReference type="GO" id="GO:0005829">
    <property type="term" value="C:cytosol"/>
    <property type="evidence" value="ECO:0007669"/>
    <property type="project" value="TreeGrafter"/>
</dbReference>
<dbReference type="GO" id="GO:0003723">
    <property type="term" value="F:RNA binding"/>
    <property type="evidence" value="ECO:0007669"/>
    <property type="project" value="UniProtKB-UniRule"/>
</dbReference>
<dbReference type="GO" id="GO:0006353">
    <property type="term" value="P:DNA-templated transcription termination"/>
    <property type="evidence" value="ECO:0007669"/>
    <property type="project" value="UniProtKB-UniRule"/>
</dbReference>
<dbReference type="GO" id="GO:0031564">
    <property type="term" value="P:transcription antitermination"/>
    <property type="evidence" value="ECO:0007669"/>
    <property type="project" value="UniProtKB-KW"/>
</dbReference>
<dbReference type="CDD" id="cd00619">
    <property type="entry name" value="Terminator_NusB"/>
    <property type="match status" value="1"/>
</dbReference>
<dbReference type="FunFam" id="1.10.940.10:FF:000001">
    <property type="entry name" value="Transcription antitermination factor NusB"/>
    <property type="match status" value="1"/>
</dbReference>
<dbReference type="Gene3D" id="1.10.940.10">
    <property type="entry name" value="NusB-like"/>
    <property type="match status" value="1"/>
</dbReference>
<dbReference type="HAMAP" id="MF_00073">
    <property type="entry name" value="NusB"/>
    <property type="match status" value="1"/>
</dbReference>
<dbReference type="InterPro" id="IPR035926">
    <property type="entry name" value="NusB-like_sf"/>
</dbReference>
<dbReference type="InterPro" id="IPR011605">
    <property type="entry name" value="NusB_fam"/>
</dbReference>
<dbReference type="InterPro" id="IPR006027">
    <property type="entry name" value="NusB_RsmB_TIM44"/>
</dbReference>
<dbReference type="NCBIfam" id="TIGR01951">
    <property type="entry name" value="nusB"/>
    <property type="match status" value="1"/>
</dbReference>
<dbReference type="PANTHER" id="PTHR11078:SF3">
    <property type="entry name" value="ANTITERMINATION NUSB DOMAIN-CONTAINING PROTEIN"/>
    <property type="match status" value="1"/>
</dbReference>
<dbReference type="PANTHER" id="PTHR11078">
    <property type="entry name" value="N UTILIZATION SUBSTANCE PROTEIN B-RELATED"/>
    <property type="match status" value="1"/>
</dbReference>
<dbReference type="Pfam" id="PF01029">
    <property type="entry name" value="NusB"/>
    <property type="match status" value="1"/>
</dbReference>
<dbReference type="SUPFAM" id="SSF48013">
    <property type="entry name" value="NusB-like"/>
    <property type="match status" value="1"/>
</dbReference>
<gene>
    <name evidence="1" type="primary">nusB</name>
    <name type="ordered locus">SbBS512_E0337</name>
</gene>
<accession>B2U4L9</accession>
<sequence length="139" mass="15689">MKPAARRRARECAVQALYSWQLSQNDIADVEYQFLAEQDVKDVDVLYFRELLAGVATNTAYLDGLMKPYLSRLLEELGQVEKAVLRIALYELSKRSDVPYKVAINEAIELAKSFGAEDSHKFVNGVLDKAAPVIRPNKK</sequence>
<keyword id="KW-1185">Reference proteome</keyword>
<keyword id="KW-0694">RNA-binding</keyword>
<keyword id="KW-0804">Transcription</keyword>
<keyword id="KW-0889">Transcription antitermination</keyword>
<keyword id="KW-0805">Transcription regulation</keyword>
<evidence type="ECO:0000255" key="1">
    <source>
        <dbReference type="HAMAP-Rule" id="MF_00073"/>
    </source>
</evidence>
<name>NUSB_SHIB3</name>
<organism>
    <name type="scientific">Shigella boydii serotype 18 (strain CDC 3083-94 / BS512)</name>
    <dbReference type="NCBI Taxonomy" id="344609"/>
    <lineage>
        <taxon>Bacteria</taxon>
        <taxon>Pseudomonadati</taxon>
        <taxon>Pseudomonadota</taxon>
        <taxon>Gammaproteobacteria</taxon>
        <taxon>Enterobacterales</taxon>
        <taxon>Enterobacteriaceae</taxon>
        <taxon>Shigella</taxon>
    </lineage>
</organism>
<reference key="1">
    <citation type="submission" date="2008-05" db="EMBL/GenBank/DDBJ databases">
        <title>Complete sequence of Shigella boydii serotype 18 strain BS512.</title>
        <authorList>
            <person name="Rasko D.A."/>
            <person name="Rosovitz M."/>
            <person name="Maurelli A.T."/>
            <person name="Myers G."/>
            <person name="Seshadri R."/>
            <person name="Cer R."/>
            <person name="Jiang L."/>
            <person name="Ravel J."/>
            <person name="Sebastian Y."/>
        </authorList>
    </citation>
    <scope>NUCLEOTIDE SEQUENCE [LARGE SCALE GENOMIC DNA]</scope>
    <source>
        <strain>CDC 3083-94 / BS512</strain>
    </source>
</reference>
<feature type="chain" id="PRO_1000092588" description="Transcription antitermination protein NusB">
    <location>
        <begin position="1"/>
        <end position="139"/>
    </location>
</feature>
<protein>
    <recommendedName>
        <fullName evidence="1">Transcription antitermination protein NusB</fullName>
    </recommendedName>
    <alternativeName>
        <fullName evidence="1">Antitermination factor NusB</fullName>
    </alternativeName>
</protein>
<proteinExistence type="inferred from homology"/>
<comment type="function">
    <text evidence="1">Involved in transcription antitermination. Required for transcription of ribosomal RNA (rRNA) genes. Binds specifically to the boxA antiterminator sequence of the ribosomal RNA (rrn) operons.</text>
</comment>
<comment type="similarity">
    <text evidence="1">Belongs to the NusB family.</text>
</comment>